<feature type="signal peptide" evidence="4">
    <location>
        <begin position="1"/>
        <end position="19"/>
    </location>
</feature>
<feature type="chain" id="PRO_0000002936" description="Laccase-2">
    <location>
        <begin position="20"/>
        <end position="599"/>
    </location>
</feature>
<feature type="domain" description="Plastocyanin-like 1">
    <location>
        <begin position="21"/>
        <end position="145"/>
    </location>
</feature>
<feature type="domain" description="Plastocyanin-like 2">
    <location>
        <begin position="157"/>
        <end position="307"/>
    </location>
</feature>
<feature type="domain" description="Plastocyanin-like 3">
    <location>
        <begin position="450"/>
        <end position="567"/>
    </location>
</feature>
<feature type="binding site" description="type 2 copper site" evidence="1">
    <location>
        <position position="82"/>
    </location>
    <ligand>
        <name>Cu cation</name>
        <dbReference type="ChEBI" id="CHEBI:23378"/>
        <label>1</label>
    </ligand>
</feature>
<feature type="binding site" description="type 3 copper site" evidence="1">
    <location>
        <position position="84"/>
    </location>
    <ligand>
        <name>Cu cation</name>
        <dbReference type="ChEBI" id="CHEBI:23378"/>
        <label>2</label>
    </ligand>
</feature>
<feature type="binding site" description="type 3 copper site" evidence="1">
    <location>
        <position position="127"/>
    </location>
    <ligand>
        <name>Cu cation</name>
        <dbReference type="ChEBI" id="CHEBI:23378"/>
        <label>2</label>
    </ligand>
</feature>
<feature type="binding site" description="type 3 copper site" evidence="1">
    <location>
        <position position="129"/>
    </location>
    <ligand>
        <name>Cu cation</name>
        <dbReference type="ChEBI" id="CHEBI:23378"/>
        <label>3</label>
    </ligand>
</feature>
<feature type="binding site" description="type 1 copper site" evidence="1">
    <location>
        <position position="497"/>
    </location>
    <ligand>
        <name>Cu cation</name>
        <dbReference type="ChEBI" id="CHEBI:23378"/>
        <label>4</label>
    </ligand>
</feature>
<feature type="binding site" description="type 2 copper site" evidence="1">
    <location>
        <position position="500"/>
    </location>
    <ligand>
        <name>Cu cation</name>
        <dbReference type="ChEBI" id="CHEBI:23378"/>
        <label>1</label>
    </ligand>
</feature>
<feature type="binding site" description="type 3 copper site" evidence="1">
    <location>
        <position position="502"/>
    </location>
    <ligand>
        <name>Cu cation</name>
        <dbReference type="ChEBI" id="CHEBI:23378"/>
        <label>3</label>
    </ligand>
</feature>
<feature type="binding site" description="type 3 copper site" evidence="1">
    <location>
        <position position="549"/>
    </location>
    <ligand>
        <name>Cu cation</name>
        <dbReference type="ChEBI" id="CHEBI:23378"/>
        <label>3</label>
    </ligand>
</feature>
<feature type="binding site" description="type 1 copper site" evidence="1">
    <location>
        <position position="550"/>
    </location>
    <ligand>
        <name>Cu cation</name>
        <dbReference type="ChEBI" id="CHEBI:23378"/>
        <label>4</label>
    </ligand>
</feature>
<feature type="binding site" description="type 3 copper site" evidence="1">
    <location>
        <position position="551"/>
    </location>
    <ligand>
        <name>Cu cation</name>
        <dbReference type="ChEBI" id="CHEBI:23378"/>
        <label>2</label>
    </ligand>
</feature>
<feature type="binding site" description="type 1 copper site" evidence="1">
    <location>
        <position position="555"/>
    </location>
    <ligand>
        <name>Cu cation</name>
        <dbReference type="ChEBI" id="CHEBI:23378"/>
        <label>4</label>
    </ligand>
</feature>
<feature type="glycosylation site" description="N-linked (GlcNAc...) asparagine" evidence="4">
    <location>
        <position position="207"/>
    </location>
</feature>
<feature type="glycosylation site" description="N-linked (GlcNAc...) asparagine" evidence="4">
    <location>
        <position position="208"/>
    </location>
</feature>
<feature type="glycosylation site" description="N-linked (GlcNAc...) asparagine" evidence="4">
    <location>
        <position position="231"/>
    </location>
</feature>
<feature type="glycosylation site" description="N-linked (GlcNAc...) asparagine" evidence="4">
    <location>
        <position position="397"/>
    </location>
</feature>
<feature type="glycosylation site" description="N-linked (GlcNAc...) asparagine" evidence="4">
    <location>
        <position position="443"/>
    </location>
</feature>
<feature type="disulfide bond" evidence="2">
    <location>
        <begin position="103"/>
        <end position="588"/>
    </location>
</feature>
<accession>Q02075</accession>
<protein>
    <recommendedName>
        <fullName>Laccase-2</fullName>
        <ecNumber evidence="2">1.10.3.2</ecNumber>
    </recommendedName>
    <alternativeName>
        <fullName>Benzenediol:oxygen oxidoreductase 2</fullName>
    </alternativeName>
    <alternativeName>
        <fullName>Diphenol oxidase 2</fullName>
    </alternativeName>
    <alternativeName>
        <fullName>Urishiol oxidase 2</fullName>
    </alternativeName>
</protein>
<organism>
    <name type="scientific">Thanatephorus cucumeris</name>
    <name type="common">Black scurf of potato</name>
    <name type="synonym">Rhizoctonia solani</name>
    <dbReference type="NCBI Taxonomy" id="107832"/>
    <lineage>
        <taxon>Eukaryota</taxon>
        <taxon>Fungi</taxon>
        <taxon>Dikarya</taxon>
        <taxon>Basidiomycota</taxon>
        <taxon>Agaricomycotina</taxon>
        <taxon>Agaricomycetes</taxon>
        <taxon>Cantharellales</taxon>
        <taxon>Ceratobasidiaceae</taxon>
        <taxon>Thanatephorus</taxon>
    </lineage>
</organism>
<gene>
    <name type="primary">LCC2</name>
</gene>
<reference key="1">
    <citation type="journal article" date="1996" name="Curr. Genet.">
        <title>The identification and characterization of four laccases from the plant pathogenic fungus Rhizoctonia solani.</title>
        <authorList>
            <person name="Wahleithner J.A."/>
            <person name="Xu F."/>
            <person name="Brown K.M."/>
            <person name="Brown S.H."/>
            <person name="Golightly E.J."/>
            <person name="Halkier T."/>
            <person name="Kauppinen S."/>
            <person name="Pederson A."/>
            <person name="Schneider P."/>
        </authorList>
    </citation>
    <scope>NUCLEOTIDE SEQUENCE [GENOMIC DNA]</scope>
    <scope>TISSUE SPECIFICITY</scope>
    <source>
        <strain>R22 / IMI 358730 / AG-6</strain>
    </source>
</reference>
<comment type="function">
    <text evidence="2">Lignin degradation and detoxification of lignin-derived products.</text>
</comment>
<comment type="catalytic activity">
    <reaction evidence="2">
        <text>4 hydroquinone + O2 = 4 benzosemiquinone + 2 H2O</text>
        <dbReference type="Rhea" id="RHEA:11276"/>
        <dbReference type="ChEBI" id="CHEBI:15377"/>
        <dbReference type="ChEBI" id="CHEBI:15379"/>
        <dbReference type="ChEBI" id="CHEBI:17594"/>
        <dbReference type="ChEBI" id="CHEBI:17977"/>
        <dbReference type="EC" id="1.10.3.2"/>
    </reaction>
</comment>
<comment type="cofactor">
    <cofactor evidence="2">
        <name>Cu cation</name>
        <dbReference type="ChEBI" id="CHEBI:23378"/>
    </cofactor>
    <text evidence="2">Binds 4 Cu cations per monomer.</text>
</comment>
<comment type="subunit">
    <text evidence="3">Homodimer.</text>
</comment>
<comment type="subcellular location">
    <subcellularLocation>
        <location evidence="2">Secreted</location>
    </subcellularLocation>
</comment>
<comment type="tissue specificity">
    <text evidence="5">In mycelia, at a lower level than LCC4.</text>
</comment>
<comment type="similarity">
    <text evidence="6">Belongs to the multicopper oxidase family.</text>
</comment>
<dbReference type="EC" id="1.10.3.2" evidence="2"/>
<dbReference type="EMBL" id="Z54276">
    <property type="protein sequence ID" value="CAA91041.1"/>
    <property type="molecule type" value="Genomic_DNA"/>
</dbReference>
<dbReference type="PIR" id="S68118">
    <property type="entry name" value="S68118"/>
</dbReference>
<dbReference type="SMR" id="Q02075"/>
<dbReference type="GlyCosmos" id="Q02075">
    <property type="glycosylation" value="5 sites, No reported glycans"/>
</dbReference>
<dbReference type="GO" id="GO:0005576">
    <property type="term" value="C:extracellular region"/>
    <property type="evidence" value="ECO:0007669"/>
    <property type="project" value="UniProtKB-SubCell"/>
</dbReference>
<dbReference type="GO" id="GO:0005507">
    <property type="term" value="F:copper ion binding"/>
    <property type="evidence" value="ECO:0007669"/>
    <property type="project" value="InterPro"/>
</dbReference>
<dbReference type="GO" id="GO:0052716">
    <property type="term" value="F:hydroquinone:oxygen oxidoreductase activity"/>
    <property type="evidence" value="ECO:0007669"/>
    <property type="project" value="UniProtKB-EC"/>
</dbReference>
<dbReference type="GO" id="GO:0046274">
    <property type="term" value="P:lignin catabolic process"/>
    <property type="evidence" value="ECO:0007669"/>
    <property type="project" value="UniProtKB-KW"/>
</dbReference>
<dbReference type="CDD" id="cd13856">
    <property type="entry name" value="CuRO_1_Tv-LCC_like"/>
    <property type="match status" value="1"/>
</dbReference>
<dbReference type="CDD" id="cd13903">
    <property type="entry name" value="CuRO_3_Tv-LCC_like"/>
    <property type="match status" value="1"/>
</dbReference>
<dbReference type="FunFam" id="2.60.40.420:FF:000045">
    <property type="entry name" value="Laccase 2"/>
    <property type="match status" value="1"/>
</dbReference>
<dbReference type="Gene3D" id="2.60.40.420">
    <property type="entry name" value="Cupredoxins - blue copper proteins"/>
    <property type="match status" value="3"/>
</dbReference>
<dbReference type="InterPro" id="IPR011707">
    <property type="entry name" value="Cu-oxidase-like_N"/>
</dbReference>
<dbReference type="InterPro" id="IPR001117">
    <property type="entry name" value="Cu-oxidase_2nd"/>
</dbReference>
<dbReference type="InterPro" id="IPR011706">
    <property type="entry name" value="Cu-oxidase_C"/>
</dbReference>
<dbReference type="InterPro" id="IPR045087">
    <property type="entry name" value="Cu-oxidase_fam"/>
</dbReference>
<dbReference type="InterPro" id="IPR033138">
    <property type="entry name" value="Cu_oxidase_CS"/>
</dbReference>
<dbReference type="InterPro" id="IPR008972">
    <property type="entry name" value="Cupredoxin"/>
</dbReference>
<dbReference type="PANTHER" id="PTHR11709:SF511">
    <property type="entry name" value="LACCASE"/>
    <property type="match status" value="1"/>
</dbReference>
<dbReference type="PANTHER" id="PTHR11709">
    <property type="entry name" value="MULTI-COPPER OXIDASE"/>
    <property type="match status" value="1"/>
</dbReference>
<dbReference type="Pfam" id="PF00394">
    <property type="entry name" value="Cu-oxidase"/>
    <property type="match status" value="1"/>
</dbReference>
<dbReference type="Pfam" id="PF07731">
    <property type="entry name" value="Cu-oxidase_2"/>
    <property type="match status" value="1"/>
</dbReference>
<dbReference type="Pfam" id="PF07732">
    <property type="entry name" value="Cu-oxidase_3"/>
    <property type="match status" value="1"/>
</dbReference>
<dbReference type="SUPFAM" id="SSF49503">
    <property type="entry name" value="Cupredoxins"/>
    <property type="match status" value="3"/>
</dbReference>
<dbReference type="PROSITE" id="PS00079">
    <property type="entry name" value="MULTICOPPER_OXIDASE1"/>
    <property type="match status" value="1"/>
</dbReference>
<sequence length="599" mass="66540">MARSTTSLFALSLVASAFARVVDYGFDVANGAVAPDGVTRNAVLVNGRFPGPLITANKGDTLKITVRNKLSDPTMRRSTTIHWHGLLQHRTAEEDGPAFVTQCPIPPQESYTYTMPLGEQTGTYWYHSHLSSQYVDGLRGPIVIYDPHDPYRNYYDVDDERTVFTLADWYHTPSEAIIATHDVLKTIPDSGTINGKGKYDPASANTNNTTLENLYTLKVKRGKRYRLRIINASAIASFRFGVQGHKCTIIEADGVLTKPIEVDAFDILAGQRYSCILKADQDPDSYWINAPITNVLNTNVQALLVYEDDKRPTHYPWKPFLTWKISNEIIQYWQHKHGSHGHKGKGHHHKVRAIGGVSGLSSRVKSRASDLSKKAVELAAALVAGEAELDKRQNEDNSTIVLDETKLIALVQPGAPGGSRPADVVVPLDFGLNFANGLWTINNVSYSPPDVPTLLKILTDKDKVDASDFTADEHTYILPKNQVVELHIKGQALGIVHPLHLHGHAFDVVQFGDNAPNYVNPPRRDVVGVTDAGVRIQFRTDNPGPWFLHCHIDWHLEEGFAMVFAEAPEDIKKGSQSVKPDGQWKKLCEKYEKLPEALQ</sequence>
<proteinExistence type="evidence at transcript level"/>
<name>LAC2_THACU</name>
<keyword id="KW-0186">Copper</keyword>
<keyword id="KW-1015">Disulfide bond</keyword>
<keyword id="KW-0325">Glycoprotein</keyword>
<keyword id="KW-0439">Lignin degradation</keyword>
<keyword id="KW-0479">Metal-binding</keyword>
<keyword id="KW-0560">Oxidoreductase</keyword>
<keyword id="KW-0677">Repeat</keyword>
<keyword id="KW-0964">Secreted</keyword>
<keyword id="KW-0732">Signal</keyword>
<evidence type="ECO:0000250" key="1">
    <source>
        <dbReference type="UniProtKB" id="D0VWU3"/>
    </source>
</evidence>
<evidence type="ECO:0000250" key="2">
    <source>
        <dbReference type="UniProtKB" id="Q70KY3"/>
    </source>
</evidence>
<evidence type="ECO:0000250" key="3">
    <source>
        <dbReference type="UniProtKB" id="Q99046"/>
    </source>
</evidence>
<evidence type="ECO:0000255" key="4"/>
<evidence type="ECO:0000269" key="5">
    <source>
    </source>
</evidence>
<evidence type="ECO:0000305" key="6"/>